<proteinExistence type="inferred from homology"/>
<keyword id="KW-0408">Iron</keyword>
<keyword id="KW-0411">Iron-sulfur</keyword>
<keyword id="KW-0479">Metal-binding</keyword>
<keyword id="KW-1185">Reference proteome</keyword>
<gene>
    <name evidence="1" type="primary">erpA</name>
    <name type="ordered locus">AZOSEA04990</name>
    <name type="ORF">ebB30</name>
</gene>
<name>ERPA_AROAE</name>
<protein>
    <recommendedName>
        <fullName evidence="1">Putative iron-sulfur cluster insertion protein ErpA</fullName>
    </recommendedName>
</protein>
<accession>Q5P7U0</accession>
<evidence type="ECO:0000255" key="1">
    <source>
        <dbReference type="HAMAP-Rule" id="MF_01380"/>
    </source>
</evidence>
<reference key="1">
    <citation type="journal article" date="2005" name="Arch. Microbiol.">
        <title>The genome sequence of an anaerobic aromatic-degrading denitrifying bacterium, strain EbN1.</title>
        <authorList>
            <person name="Rabus R."/>
            <person name="Kube M."/>
            <person name="Heider J."/>
            <person name="Beck A."/>
            <person name="Heitmann K."/>
            <person name="Widdel F."/>
            <person name="Reinhardt R."/>
        </authorList>
    </citation>
    <scope>NUCLEOTIDE SEQUENCE [LARGE SCALE GENOMIC DNA]</scope>
    <source>
        <strain>DSM 19018 / LMG 30748 / EbN1</strain>
    </source>
</reference>
<organism>
    <name type="scientific">Aromatoleum aromaticum (strain DSM 19018 / LMG 30748 / EbN1)</name>
    <name type="common">Azoarcus sp. (strain EbN1)</name>
    <dbReference type="NCBI Taxonomy" id="76114"/>
    <lineage>
        <taxon>Bacteria</taxon>
        <taxon>Pseudomonadati</taxon>
        <taxon>Pseudomonadota</taxon>
        <taxon>Betaproteobacteria</taxon>
        <taxon>Rhodocyclales</taxon>
        <taxon>Rhodocyclaceae</taxon>
        <taxon>Aromatoleum</taxon>
    </lineage>
</organism>
<sequence>MNTVVDTPELMVFTDSAAMKVKELIEEEGNPELKLRVFVSGGGCSGFQYGFTFDEEVNEDDTAFEKNGVTLLVDPMSYQYLVGAEIDYSEGLEGSQFVIRNPNATSTCGCGSSFSA</sequence>
<dbReference type="EMBL" id="CR555306">
    <property type="protein sequence ID" value="CAI06621.1"/>
    <property type="molecule type" value="Genomic_DNA"/>
</dbReference>
<dbReference type="RefSeq" id="WP_011236351.1">
    <property type="nucleotide sequence ID" value="NC_006513.1"/>
</dbReference>
<dbReference type="SMR" id="Q5P7U0"/>
<dbReference type="STRING" id="76114.ebB30"/>
<dbReference type="KEGG" id="eba:ebB30"/>
<dbReference type="eggNOG" id="COG0316">
    <property type="taxonomic scope" value="Bacteria"/>
</dbReference>
<dbReference type="HOGENOM" id="CLU_069054_5_3_4"/>
<dbReference type="OrthoDB" id="9801228at2"/>
<dbReference type="Proteomes" id="UP000006552">
    <property type="component" value="Chromosome"/>
</dbReference>
<dbReference type="GO" id="GO:0051537">
    <property type="term" value="F:2 iron, 2 sulfur cluster binding"/>
    <property type="evidence" value="ECO:0007669"/>
    <property type="project" value="TreeGrafter"/>
</dbReference>
<dbReference type="GO" id="GO:0051539">
    <property type="term" value="F:4 iron, 4 sulfur cluster binding"/>
    <property type="evidence" value="ECO:0007669"/>
    <property type="project" value="TreeGrafter"/>
</dbReference>
<dbReference type="GO" id="GO:0005506">
    <property type="term" value="F:iron ion binding"/>
    <property type="evidence" value="ECO:0007669"/>
    <property type="project" value="UniProtKB-UniRule"/>
</dbReference>
<dbReference type="GO" id="GO:0016226">
    <property type="term" value="P:iron-sulfur cluster assembly"/>
    <property type="evidence" value="ECO:0007669"/>
    <property type="project" value="UniProtKB-UniRule"/>
</dbReference>
<dbReference type="FunFam" id="2.60.300.12:FF:000002">
    <property type="entry name" value="Iron-sulfur cluster insertion protein ErpA"/>
    <property type="match status" value="1"/>
</dbReference>
<dbReference type="Gene3D" id="2.60.300.12">
    <property type="entry name" value="HesB-like domain"/>
    <property type="match status" value="1"/>
</dbReference>
<dbReference type="HAMAP" id="MF_01380">
    <property type="entry name" value="Fe_S_insert_ErpA"/>
    <property type="match status" value="1"/>
</dbReference>
<dbReference type="InterPro" id="IPR000361">
    <property type="entry name" value="FeS_biogenesis"/>
</dbReference>
<dbReference type="InterPro" id="IPR016092">
    <property type="entry name" value="FeS_cluster_insertion"/>
</dbReference>
<dbReference type="InterPro" id="IPR017870">
    <property type="entry name" value="FeS_cluster_insertion_CS"/>
</dbReference>
<dbReference type="InterPro" id="IPR023063">
    <property type="entry name" value="FeS_cluster_insertion_RrpA"/>
</dbReference>
<dbReference type="InterPro" id="IPR035903">
    <property type="entry name" value="HesB-like_dom_sf"/>
</dbReference>
<dbReference type="NCBIfam" id="TIGR00049">
    <property type="entry name" value="iron-sulfur cluster assembly accessory protein"/>
    <property type="match status" value="1"/>
</dbReference>
<dbReference type="NCBIfam" id="NF010147">
    <property type="entry name" value="PRK13623.1"/>
    <property type="match status" value="1"/>
</dbReference>
<dbReference type="PANTHER" id="PTHR43011">
    <property type="entry name" value="IRON-SULFUR CLUSTER ASSEMBLY 2 HOMOLOG, MITOCHONDRIAL"/>
    <property type="match status" value="1"/>
</dbReference>
<dbReference type="PANTHER" id="PTHR43011:SF1">
    <property type="entry name" value="IRON-SULFUR CLUSTER ASSEMBLY 2 HOMOLOG, MITOCHONDRIAL"/>
    <property type="match status" value="1"/>
</dbReference>
<dbReference type="Pfam" id="PF01521">
    <property type="entry name" value="Fe-S_biosyn"/>
    <property type="match status" value="1"/>
</dbReference>
<dbReference type="SUPFAM" id="SSF89360">
    <property type="entry name" value="HesB-like domain"/>
    <property type="match status" value="1"/>
</dbReference>
<dbReference type="PROSITE" id="PS01152">
    <property type="entry name" value="HESB"/>
    <property type="match status" value="1"/>
</dbReference>
<comment type="function">
    <text evidence="1">Required for insertion of 4Fe-4S clusters.</text>
</comment>
<comment type="cofactor">
    <cofactor evidence="1">
        <name>iron-sulfur cluster</name>
        <dbReference type="ChEBI" id="CHEBI:30408"/>
    </cofactor>
    <text evidence="1">Binds 1 iron-sulfur cluster per subunit.</text>
</comment>
<comment type="subunit">
    <text evidence="1">Homodimer.</text>
</comment>
<comment type="similarity">
    <text evidence="1">Belongs to the HesB/IscA family.</text>
</comment>
<feature type="chain" id="PRO_0000311445" description="Putative iron-sulfur cluster insertion protein ErpA">
    <location>
        <begin position="1"/>
        <end position="116"/>
    </location>
</feature>
<feature type="binding site" evidence="1">
    <location>
        <position position="44"/>
    </location>
    <ligand>
        <name>iron-sulfur cluster</name>
        <dbReference type="ChEBI" id="CHEBI:30408"/>
    </ligand>
</feature>
<feature type="binding site" evidence="1">
    <location>
        <position position="108"/>
    </location>
    <ligand>
        <name>iron-sulfur cluster</name>
        <dbReference type="ChEBI" id="CHEBI:30408"/>
    </ligand>
</feature>
<feature type="binding site" evidence="1">
    <location>
        <position position="110"/>
    </location>
    <ligand>
        <name>iron-sulfur cluster</name>
        <dbReference type="ChEBI" id="CHEBI:30408"/>
    </ligand>
</feature>